<evidence type="ECO:0000250" key="1"/>
<evidence type="ECO:0000250" key="2">
    <source>
        <dbReference type="UniProtKB" id="P14324"/>
    </source>
</evidence>
<evidence type="ECO:0000250" key="3">
    <source>
        <dbReference type="UniProtKB" id="Q12051"/>
    </source>
</evidence>
<evidence type="ECO:0000269" key="4">
    <source>
    </source>
</evidence>
<evidence type="ECO:0000269" key="5">
    <source>
    </source>
</evidence>
<evidence type="ECO:0000269" key="6">
    <source>
    </source>
</evidence>
<evidence type="ECO:0000269" key="7">
    <source>
    </source>
</evidence>
<evidence type="ECO:0000303" key="8">
    <source>
    </source>
</evidence>
<evidence type="ECO:0000305" key="9"/>
<evidence type="ECO:0000305" key="10">
    <source>
    </source>
</evidence>
<evidence type="ECO:0007744" key="11">
    <source>
    </source>
</evidence>
<evidence type="ECO:0007829" key="12">
    <source>
        <dbReference type="PDB" id="5E8L"/>
    </source>
</evidence>
<accession>P34802</accession>
<accession>O23201</accession>
<protein>
    <recommendedName>
        <fullName>Heterodimeric geranylgeranyl pyrophosphate synthase large subunit 1, chloroplastic</fullName>
        <shortName>GGPP synthase 1</shortName>
        <shortName>GGPS1</shortName>
        <ecNumber>2.5.1.-</ecNumber>
    </recommendedName>
    <alternativeName>
        <fullName>(2E,6E)-farnesyl diphosphate synthase 1</fullName>
    </alternativeName>
    <alternativeName>
        <fullName>Dimethylallyltranstransferase 1</fullName>
        <ecNumber>2.5.1.1</ecNumber>
    </alternativeName>
    <alternativeName>
        <fullName>Farnesyl diphosphate synthase 1</fullName>
    </alternativeName>
    <alternativeName>
        <fullName>Farnesyltranstransferase 1</fullName>
        <ecNumber evidence="4">2.5.1.29</ecNumber>
    </alternativeName>
    <alternativeName>
        <fullName>Geranyltranstransferase 1</fullName>
        <ecNumber>2.5.1.10</ecNumber>
    </alternativeName>
</protein>
<dbReference type="EC" id="2.5.1.-"/>
<dbReference type="EC" id="2.5.1.1"/>
<dbReference type="EC" id="2.5.1.29" evidence="4"/>
<dbReference type="EC" id="2.5.1.10"/>
<dbReference type="EMBL" id="L25813">
    <property type="protein sequence ID" value="AAA32797.1"/>
    <property type="molecule type" value="mRNA"/>
</dbReference>
<dbReference type="EMBL" id="Z99708">
    <property type="protein sequence ID" value="CAB16803.1"/>
    <property type="molecule type" value="Genomic_DNA"/>
</dbReference>
<dbReference type="EMBL" id="AL161590">
    <property type="protein sequence ID" value="CAB80347.1"/>
    <property type="molecule type" value="Genomic_DNA"/>
</dbReference>
<dbReference type="EMBL" id="CP002687">
    <property type="protein sequence ID" value="AEE86705.1"/>
    <property type="molecule type" value="Genomic_DNA"/>
</dbReference>
<dbReference type="PIR" id="F85434">
    <property type="entry name" value="F85434"/>
</dbReference>
<dbReference type="RefSeq" id="NP_195399.1">
    <molecule id="P34802-1"/>
    <property type="nucleotide sequence ID" value="NM_119845.3"/>
</dbReference>
<dbReference type="PDB" id="5E8L">
    <property type="method" value="X-ray"/>
    <property type="resolution" value="2.81 A"/>
    <property type="chains" value="A/B=72-371"/>
</dbReference>
<dbReference type="PDBsum" id="5E8L"/>
<dbReference type="SMR" id="P34802"/>
<dbReference type="BioGRID" id="15115">
    <property type="interactions" value="3"/>
</dbReference>
<dbReference type="FunCoup" id="P34802">
    <property type="interactions" value="251"/>
</dbReference>
<dbReference type="STRING" id="3702.P34802"/>
<dbReference type="iPTMnet" id="P34802"/>
<dbReference type="PaxDb" id="3702-AT4G36810.1"/>
<dbReference type="ProteomicsDB" id="220742"/>
<dbReference type="EnsemblPlants" id="AT4G36810.1">
    <molecule id="P34802-1"/>
    <property type="protein sequence ID" value="AT4G36810.1"/>
    <property type="gene ID" value="AT4G36810"/>
</dbReference>
<dbReference type="GeneID" id="829834"/>
<dbReference type="Gramene" id="AT4G36810.1">
    <molecule id="P34802-1"/>
    <property type="protein sequence ID" value="AT4G36810.1"/>
    <property type="gene ID" value="AT4G36810"/>
</dbReference>
<dbReference type="KEGG" id="ath:AT4G36810"/>
<dbReference type="Araport" id="AT4G36810"/>
<dbReference type="TAIR" id="AT4G36810">
    <property type="gene designation" value="GGPS1"/>
</dbReference>
<dbReference type="eggNOG" id="KOG0776">
    <property type="taxonomic scope" value="Eukaryota"/>
</dbReference>
<dbReference type="HOGENOM" id="CLU_014015_0_0_1"/>
<dbReference type="InParanoid" id="P34802"/>
<dbReference type="OMA" id="AWAEFGY"/>
<dbReference type="OrthoDB" id="6921389at2759"/>
<dbReference type="PhylomeDB" id="P34802"/>
<dbReference type="BioCyc" id="ARA:AT4G36810-MONOMER"/>
<dbReference type="BioCyc" id="MetaCyc:AT4G36810-MONOMER"/>
<dbReference type="UniPathway" id="UPA00259">
    <property type="reaction ID" value="UER00368"/>
</dbReference>
<dbReference type="UniPathway" id="UPA00260">
    <property type="reaction ID" value="UER00369"/>
</dbReference>
<dbReference type="UniPathway" id="UPA00389">
    <property type="reaction ID" value="UER00564"/>
</dbReference>
<dbReference type="PRO" id="PR:P34802"/>
<dbReference type="Proteomes" id="UP000006548">
    <property type="component" value="Chromosome 4"/>
</dbReference>
<dbReference type="ExpressionAtlas" id="P34802">
    <property type="expression patterns" value="baseline and differential"/>
</dbReference>
<dbReference type="GO" id="GO:0009507">
    <property type="term" value="C:chloroplast"/>
    <property type="evidence" value="ECO:0000314"/>
    <property type="project" value="TAIR"/>
</dbReference>
<dbReference type="GO" id="GO:0005829">
    <property type="term" value="C:cytosol"/>
    <property type="evidence" value="ECO:0000314"/>
    <property type="project" value="TAIR"/>
</dbReference>
<dbReference type="GO" id="GO:0009513">
    <property type="term" value="C:etioplast"/>
    <property type="evidence" value="ECO:0000314"/>
    <property type="project" value="TAIR"/>
</dbReference>
<dbReference type="GO" id="GO:0009536">
    <property type="term" value="C:plastid"/>
    <property type="evidence" value="ECO:0000314"/>
    <property type="project" value="TAIR"/>
</dbReference>
<dbReference type="GO" id="GO:0004337">
    <property type="term" value="F:(2E,6E)-farnesyl diphosphate synthase activity"/>
    <property type="evidence" value="ECO:0007669"/>
    <property type="project" value="UniProtKB-EC"/>
</dbReference>
<dbReference type="GO" id="GO:0004161">
    <property type="term" value="F:dimethylallyltranstransferase activity"/>
    <property type="evidence" value="ECO:0000314"/>
    <property type="project" value="TAIR"/>
</dbReference>
<dbReference type="GO" id="GO:0004311">
    <property type="term" value="F:geranylgeranyl diphosphate synthase activity"/>
    <property type="evidence" value="ECO:0000314"/>
    <property type="project" value="TAIR"/>
</dbReference>
<dbReference type="GO" id="GO:0046872">
    <property type="term" value="F:metal ion binding"/>
    <property type="evidence" value="ECO:0007669"/>
    <property type="project" value="UniProtKB-KW"/>
</dbReference>
<dbReference type="GO" id="GO:0016117">
    <property type="term" value="P:carotenoid biosynthetic process"/>
    <property type="evidence" value="ECO:0007669"/>
    <property type="project" value="UniProtKB-KW"/>
</dbReference>
<dbReference type="GO" id="GO:0009793">
    <property type="term" value="P:embryo development ending in seed dormancy"/>
    <property type="evidence" value="ECO:0000315"/>
    <property type="project" value="TAIR"/>
</dbReference>
<dbReference type="GO" id="GO:0045337">
    <property type="term" value="P:farnesyl diphosphate biosynthetic process"/>
    <property type="evidence" value="ECO:0007669"/>
    <property type="project" value="UniProtKB-UniPathway"/>
</dbReference>
<dbReference type="GO" id="GO:0033384">
    <property type="term" value="P:geranyl diphosphate biosynthetic process"/>
    <property type="evidence" value="ECO:0007669"/>
    <property type="project" value="UniProtKB-UniPathway"/>
</dbReference>
<dbReference type="GO" id="GO:0033386">
    <property type="term" value="P:geranylgeranyl diphosphate biosynthetic process"/>
    <property type="evidence" value="ECO:0007669"/>
    <property type="project" value="UniProtKB-UniPathway"/>
</dbReference>
<dbReference type="GO" id="GO:0008299">
    <property type="term" value="P:isoprenoid biosynthetic process"/>
    <property type="evidence" value="ECO:0000304"/>
    <property type="project" value="TAIR"/>
</dbReference>
<dbReference type="GO" id="GO:0043693">
    <property type="term" value="P:monoterpene biosynthetic process"/>
    <property type="evidence" value="ECO:0000315"/>
    <property type="project" value="TAIR"/>
</dbReference>
<dbReference type="CDD" id="cd00685">
    <property type="entry name" value="Trans_IPPS_HT"/>
    <property type="match status" value="1"/>
</dbReference>
<dbReference type="FunFam" id="1.10.600.10:FF:000001">
    <property type="entry name" value="Geranylgeranyl diphosphate synthase"/>
    <property type="match status" value="1"/>
</dbReference>
<dbReference type="Gene3D" id="1.10.600.10">
    <property type="entry name" value="Farnesyl Diphosphate Synthase"/>
    <property type="match status" value="1"/>
</dbReference>
<dbReference type="InterPro" id="IPR008949">
    <property type="entry name" value="Isoprenoid_synthase_dom_sf"/>
</dbReference>
<dbReference type="InterPro" id="IPR000092">
    <property type="entry name" value="Polyprenyl_synt"/>
</dbReference>
<dbReference type="InterPro" id="IPR033749">
    <property type="entry name" value="Polyprenyl_synt_CS"/>
</dbReference>
<dbReference type="InterPro" id="IPR053378">
    <property type="entry name" value="Prenyl_diphosphate_synthase"/>
</dbReference>
<dbReference type="NCBIfam" id="NF045485">
    <property type="entry name" value="FPPsyn"/>
    <property type="match status" value="1"/>
</dbReference>
<dbReference type="PANTHER" id="PTHR43281">
    <property type="entry name" value="FARNESYL DIPHOSPHATE SYNTHASE"/>
    <property type="match status" value="1"/>
</dbReference>
<dbReference type="PANTHER" id="PTHR43281:SF32">
    <property type="entry name" value="HETERODIMERIC GERANYLGERANYL PYROPHOSPHATE SYNTHASE LARGE SUBUNIT 1, CHLOROPLASTIC"/>
    <property type="match status" value="1"/>
</dbReference>
<dbReference type="Pfam" id="PF00348">
    <property type="entry name" value="polyprenyl_synt"/>
    <property type="match status" value="1"/>
</dbReference>
<dbReference type="SFLD" id="SFLDS00005">
    <property type="entry name" value="Isoprenoid_Synthase_Type_I"/>
    <property type="match status" value="1"/>
</dbReference>
<dbReference type="SFLD" id="SFLDG01017">
    <property type="entry name" value="Polyprenyl_Transferase_Like"/>
    <property type="match status" value="1"/>
</dbReference>
<dbReference type="SUPFAM" id="SSF48576">
    <property type="entry name" value="Terpenoid synthases"/>
    <property type="match status" value="1"/>
</dbReference>
<dbReference type="PROSITE" id="PS00723">
    <property type="entry name" value="POLYPRENYL_SYNTHASE_1"/>
    <property type="match status" value="1"/>
</dbReference>
<dbReference type="PROSITE" id="PS00444">
    <property type="entry name" value="POLYPRENYL_SYNTHASE_2"/>
    <property type="match status" value="1"/>
</dbReference>
<gene>
    <name type="primary">GGPPS1</name>
    <name type="synonym">GGPPS11</name>
    <name type="synonym">GGPS1</name>
    <name type="ordered locus">At4g36810</name>
    <name type="ORF">C7A10.550</name>
</gene>
<organism>
    <name type="scientific">Arabidopsis thaliana</name>
    <name type="common">Mouse-ear cress</name>
    <dbReference type="NCBI Taxonomy" id="3702"/>
    <lineage>
        <taxon>Eukaryota</taxon>
        <taxon>Viridiplantae</taxon>
        <taxon>Streptophyta</taxon>
        <taxon>Embryophyta</taxon>
        <taxon>Tracheophyta</taxon>
        <taxon>Spermatophyta</taxon>
        <taxon>Magnoliopsida</taxon>
        <taxon>eudicotyledons</taxon>
        <taxon>Gunneridae</taxon>
        <taxon>Pentapetalae</taxon>
        <taxon>rosids</taxon>
        <taxon>malvids</taxon>
        <taxon>Brassicales</taxon>
        <taxon>Brassicaceae</taxon>
        <taxon>Camelineae</taxon>
        <taxon>Arabidopsis</taxon>
    </lineage>
</organism>
<proteinExistence type="evidence at protein level"/>
<comment type="function">
    <text evidence="5">Heterodimeric geranyl(geranyl)-diphosphate (GPP) synthase large subunit. In vitro, the large subunit catalyzes mainly the trans-addition of the three molecules of IPP onto DMAPP to form geranylgeranyl pyrophosphate while the small subunit alone is inactive. Upon association of the two subunits, the product profile changes and the production of gerany-diphosphate is strongly increased.</text>
</comment>
<comment type="catalytic activity">
    <reaction>
        <text>isopentenyl diphosphate + dimethylallyl diphosphate = (2E)-geranyl diphosphate + diphosphate</text>
        <dbReference type="Rhea" id="RHEA:22408"/>
        <dbReference type="ChEBI" id="CHEBI:33019"/>
        <dbReference type="ChEBI" id="CHEBI:57623"/>
        <dbReference type="ChEBI" id="CHEBI:58057"/>
        <dbReference type="ChEBI" id="CHEBI:128769"/>
        <dbReference type="EC" id="2.5.1.1"/>
    </reaction>
</comment>
<comment type="catalytic activity">
    <reaction>
        <text>isopentenyl diphosphate + (2E)-geranyl diphosphate = (2E,6E)-farnesyl diphosphate + diphosphate</text>
        <dbReference type="Rhea" id="RHEA:19361"/>
        <dbReference type="ChEBI" id="CHEBI:33019"/>
        <dbReference type="ChEBI" id="CHEBI:58057"/>
        <dbReference type="ChEBI" id="CHEBI:128769"/>
        <dbReference type="ChEBI" id="CHEBI:175763"/>
        <dbReference type="EC" id="2.5.1.10"/>
    </reaction>
</comment>
<comment type="catalytic activity">
    <reaction evidence="4">
        <text>isopentenyl diphosphate + (2E,6E)-farnesyl diphosphate = (2E,6E,10E)-geranylgeranyl diphosphate + diphosphate</text>
        <dbReference type="Rhea" id="RHEA:17653"/>
        <dbReference type="ChEBI" id="CHEBI:33019"/>
        <dbReference type="ChEBI" id="CHEBI:58756"/>
        <dbReference type="ChEBI" id="CHEBI:128769"/>
        <dbReference type="ChEBI" id="CHEBI:175763"/>
        <dbReference type="EC" id="2.5.1.29"/>
    </reaction>
    <physiologicalReaction direction="left-to-right" evidence="10">
        <dbReference type="Rhea" id="RHEA:17654"/>
    </physiologicalReaction>
</comment>
<comment type="cofactor">
    <cofactor evidence="1">
        <name>Mg(2+)</name>
        <dbReference type="ChEBI" id="CHEBI:18420"/>
    </cofactor>
    <text evidence="1">Binds 2 Mg(2+) ions per subunit.</text>
</comment>
<comment type="pathway">
    <text>Isoprenoid biosynthesis; farnesyl diphosphate biosynthesis; farnesyl diphosphate from geranyl diphosphate and isopentenyl diphosphate: step 1/1.</text>
</comment>
<comment type="pathway">
    <text>Isoprenoid biosynthesis; geranyl diphosphate biosynthesis; geranyl diphosphate from dimethylallyl diphosphate and isopentenyl diphosphate: step 1/1.</text>
</comment>
<comment type="pathway">
    <text>Isoprenoid biosynthesis; geranylgeranyl diphosphate biosynthesis; geranylgeranyl diphosphate from farnesyl diphosphate and isopentenyl diphosphate: step 1/1.</text>
</comment>
<comment type="subunit">
    <text evidence="5 6">Forms homodimers (PubMed:26537048). Part of a heterodimeric geranyl(geranyl)diphosphate synthase. Interacts with GGR (PubMed:19482937).</text>
</comment>
<comment type="subcellular location">
    <molecule>Isoform 1</molecule>
    <subcellularLocation>
        <location evidence="4 7">Plastid</location>
        <location evidence="4 7">Chloroplast</location>
    </subcellularLocation>
</comment>
<comment type="subcellular location">
    <molecule>Isoform 2</molecule>
    <subcellularLocation>
        <location evidence="7">Cytoplasm</location>
    </subcellularLocation>
</comment>
<comment type="alternative products">
    <event type="alternative initiation"/>
    <isoform>
        <id>P34802-1</id>
        <name>1</name>
        <name evidence="8">GGPPS11</name>
        <sequence type="displayed"/>
    </isoform>
    <isoform>
        <id>P34802-2</id>
        <name>2</name>
        <name evidence="8">GGPPS11S</name>
        <sequence type="described" ref="VSP_062244"/>
    </isoform>
</comment>
<comment type="tissue specificity">
    <text evidence="4">Expressed ubiquitously.</text>
</comment>
<comment type="similarity">
    <text evidence="9">Belongs to the FPP/GGPP synthase family.</text>
</comment>
<keyword id="KW-0002">3D-structure</keyword>
<keyword id="KW-0007">Acetylation</keyword>
<keyword id="KW-0024">Alternative initiation</keyword>
<keyword id="KW-0125">Carotenoid biosynthesis</keyword>
<keyword id="KW-0150">Chloroplast</keyword>
<keyword id="KW-0963">Cytoplasm</keyword>
<keyword id="KW-0414">Isoprene biosynthesis</keyword>
<keyword id="KW-0460">Magnesium</keyword>
<keyword id="KW-0479">Metal-binding</keyword>
<keyword id="KW-0934">Plastid</keyword>
<keyword id="KW-1185">Reference proteome</keyword>
<keyword id="KW-0808">Transferase</keyword>
<keyword id="KW-0809">Transit peptide</keyword>
<reference key="1">
    <citation type="journal article" date="1994" name="Plant Physiol.">
        <title>Nucleotide sequence of an Arabidopsis cDNA for geranylgeranyl pyrophosphate synthase.</title>
        <authorList>
            <person name="Scolnik P.A."/>
            <person name="Bartley G.E."/>
        </authorList>
    </citation>
    <scope>NUCLEOTIDE SEQUENCE [MRNA]</scope>
</reference>
<reference key="2">
    <citation type="journal article" date="1998" name="Nature">
        <title>Analysis of 1.9 Mb of contiguous sequence from chromosome 4 of Arabidopsis thaliana.</title>
        <authorList>
            <person name="Bevan M."/>
            <person name="Bancroft I."/>
            <person name="Bent E."/>
            <person name="Love K."/>
            <person name="Goodman H.M."/>
            <person name="Dean C."/>
            <person name="Bergkamp R."/>
            <person name="Dirkse W."/>
            <person name="van Staveren M."/>
            <person name="Stiekema W."/>
            <person name="Drost L."/>
            <person name="Ridley P."/>
            <person name="Hudson S.-A."/>
            <person name="Patel K."/>
            <person name="Murphy G."/>
            <person name="Piffanelli P."/>
            <person name="Wedler H."/>
            <person name="Wedler E."/>
            <person name="Wambutt R."/>
            <person name="Weitzenegger T."/>
            <person name="Pohl T."/>
            <person name="Terryn N."/>
            <person name="Gielen J."/>
            <person name="Villarroel R."/>
            <person name="De Clercq R."/>
            <person name="van Montagu M."/>
            <person name="Lecharny A."/>
            <person name="Aubourg S."/>
            <person name="Gy I."/>
            <person name="Kreis M."/>
            <person name="Lao N."/>
            <person name="Kavanagh T."/>
            <person name="Hempel S."/>
            <person name="Kotter P."/>
            <person name="Entian K.-D."/>
            <person name="Rieger M."/>
            <person name="Schaefer M."/>
            <person name="Funk B."/>
            <person name="Mueller-Auer S."/>
            <person name="Silvey M."/>
            <person name="James R."/>
            <person name="Monfort A."/>
            <person name="Pons A."/>
            <person name="Puigdomenech P."/>
            <person name="Douka A."/>
            <person name="Voukelatou E."/>
            <person name="Milioni D."/>
            <person name="Hatzopoulos P."/>
            <person name="Piravandi E."/>
            <person name="Obermaier B."/>
            <person name="Hilbert H."/>
            <person name="Duesterhoeft A."/>
            <person name="Moores T."/>
            <person name="Jones J.D.G."/>
            <person name="Eneva T."/>
            <person name="Palme K."/>
            <person name="Benes V."/>
            <person name="Rechmann S."/>
            <person name="Ansorge W."/>
            <person name="Cooke R."/>
            <person name="Berger C."/>
            <person name="Delseny M."/>
            <person name="Voet M."/>
            <person name="Volckaert G."/>
            <person name="Mewes H.-W."/>
            <person name="Klosterman S."/>
            <person name="Schueller C."/>
            <person name="Chalwatzis N."/>
        </authorList>
    </citation>
    <scope>NUCLEOTIDE SEQUENCE [LARGE SCALE GENOMIC DNA]</scope>
    <source>
        <strain>cv. Columbia</strain>
    </source>
</reference>
<reference key="3">
    <citation type="journal article" date="1999" name="Nature">
        <title>Sequence and analysis of chromosome 4 of the plant Arabidopsis thaliana.</title>
        <authorList>
            <person name="Mayer K.F.X."/>
            <person name="Schueller C."/>
            <person name="Wambutt R."/>
            <person name="Murphy G."/>
            <person name="Volckaert G."/>
            <person name="Pohl T."/>
            <person name="Duesterhoeft A."/>
            <person name="Stiekema W."/>
            <person name="Entian K.-D."/>
            <person name="Terryn N."/>
            <person name="Harris B."/>
            <person name="Ansorge W."/>
            <person name="Brandt P."/>
            <person name="Grivell L.A."/>
            <person name="Rieger M."/>
            <person name="Weichselgartner M."/>
            <person name="de Simone V."/>
            <person name="Obermaier B."/>
            <person name="Mache R."/>
            <person name="Mueller M."/>
            <person name="Kreis M."/>
            <person name="Delseny M."/>
            <person name="Puigdomenech P."/>
            <person name="Watson M."/>
            <person name="Schmidtheini T."/>
            <person name="Reichert B."/>
            <person name="Portetelle D."/>
            <person name="Perez-Alonso M."/>
            <person name="Boutry M."/>
            <person name="Bancroft I."/>
            <person name="Vos P."/>
            <person name="Hoheisel J."/>
            <person name="Zimmermann W."/>
            <person name="Wedler H."/>
            <person name="Ridley P."/>
            <person name="Langham S.-A."/>
            <person name="McCullagh B."/>
            <person name="Bilham L."/>
            <person name="Robben J."/>
            <person name="van der Schueren J."/>
            <person name="Grymonprez B."/>
            <person name="Chuang Y.-J."/>
            <person name="Vandenbussche F."/>
            <person name="Braeken M."/>
            <person name="Weltjens I."/>
            <person name="Voet M."/>
            <person name="Bastiaens I."/>
            <person name="Aert R."/>
            <person name="Defoor E."/>
            <person name="Weitzenegger T."/>
            <person name="Bothe G."/>
            <person name="Ramsperger U."/>
            <person name="Hilbert H."/>
            <person name="Braun M."/>
            <person name="Holzer E."/>
            <person name="Brandt A."/>
            <person name="Peters S."/>
            <person name="van Staveren M."/>
            <person name="Dirkse W."/>
            <person name="Mooijman P."/>
            <person name="Klein Lankhorst R."/>
            <person name="Rose M."/>
            <person name="Hauf J."/>
            <person name="Koetter P."/>
            <person name="Berneiser S."/>
            <person name="Hempel S."/>
            <person name="Feldpausch M."/>
            <person name="Lamberth S."/>
            <person name="Van den Daele H."/>
            <person name="De Keyser A."/>
            <person name="Buysshaert C."/>
            <person name="Gielen J."/>
            <person name="Villarroel R."/>
            <person name="De Clercq R."/>
            <person name="van Montagu M."/>
            <person name="Rogers J."/>
            <person name="Cronin A."/>
            <person name="Quail M.A."/>
            <person name="Bray-Allen S."/>
            <person name="Clark L."/>
            <person name="Doggett J."/>
            <person name="Hall S."/>
            <person name="Kay M."/>
            <person name="Lennard N."/>
            <person name="McLay K."/>
            <person name="Mayes R."/>
            <person name="Pettett A."/>
            <person name="Rajandream M.A."/>
            <person name="Lyne M."/>
            <person name="Benes V."/>
            <person name="Rechmann S."/>
            <person name="Borkova D."/>
            <person name="Bloecker H."/>
            <person name="Scharfe M."/>
            <person name="Grimm M."/>
            <person name="Loehnert T.-H."/>
            <person name="Dose S."/>
            <person name="de Haan M."/>
            <person name="Maarse A.C."/>
            <person name="Schaefer M."/>
            <person name="Mueller-Auer S."/>
            <person name="Gabel C."/>
            <person name="Fuchs M."/>
            <person name="Fartmann B."/>
            <person name="Granderath K."/>
            <person name="Dauner D."/>
            <person name="Herzl A."/>
            <person name="Neumann S."/>
            <person name="Argiriou A."/>
            <person name="Vitale D."/>
            <person name="Liguori R."/>
            <person name="Piravandi E."/>
            <person name="Massenet O."/>
            <person name="Quigley F."/>
            <person name="Clabauld G."/>
            <person name="Muendlein A."/>
            <person name="Felber R."/>
            <person name="Schnabl S."/>
            <person name="Hiller R."/>
            <person name="Schmidt W."/>
            <person name="Lecharny A."/>
            <person name="Aubourg S."/>
            <person name="Chefdor F."/>
            <person name="Cooke R."/>
            <person name="Berger C."/>
            <person name="Monfort A."/>
            <person name="Casacuberta E."/>
            <person name="Gibbons T."/>
            <person name="Weber N."/>
            <person name="Vandenbol M."/>
            <person name="Bargues M."/>
            <person name="Terol J."/>
            <person name="Torres A."/>
            <person name="Perez-Perez A."/>
            <person name="Purnelle B."/>
            <person name="Bent E."/>
            <person name="Johnson S."/>
            <person name="Tacon D."/>
            <person name="Jesse T."/>
            <person name="Heijnen L."/>
            <person name="Schwarz S."/>
            <person name="Scholler P."/>
            <person name="Heber S."/>
            <person name="Francs P."/>
            <person name="Bielke C."/>
            <person name="Frishman D."/>
            <person name="Haase D."/>
            <person name="Lemcke K."/>
            <person name="Mewes H.-W."/>
            <person name="Stocker S."/>
            <person name="Zaccaria P."/>
            <person name="Bevan M."/>
            <person name="Wilson R.K."/>
            <person name="de la Bastide M."/>
            <person name="Habermann K."/>
            <person name="Parnell L."/>
            <person name="Dedhia N."/>
            <person name="Gnoj L."/>
            <person name="Schutz K."/>
            <person name="Huang E."/>
            <person name="Spiegel L."/>
            <person name="Sekhon M."/>
            <person name="Murray J."/>
            <person name="Sheet P."/>
            <person name="Cordes M."/>
            <person name="Abu-Threideh J."/>
            <person name="Stoneking T."/>
            <person name="Kalicki J."/>
            <person name="Graves T."/>
            <person name="Harmon G."/>
            <person name="Edwards J."/>
            <person name="Latreille P."/>
            <person name="Courtney L."/>
            <person name="Cloud J."/>
            <person name="Abbott A."/>
            <person name="Scott K."/>
            <person name="Johnson D."/>
            <person name="Minx P."/>
            <person name="Bentley D."/>
            <person name="Fulton B."/>
            <person name="Miller N."/>
            <person name="Greco T."/>
            <person name="Kemp K."/>
            <person name="Kramer J."/>
            <person name="Fulton L."/>
            <person name="Mardis E."/>
            <person name="Dante M."/>
            <person name="Pepin K."/>
            <person name="Hillier L.W."/>
            <person name="Nelson J."/>
            <person name="Spieth J."/>
            <person name="Ryan E."/>
            <person name="Andrews S."/>
            <person name="Geisel C."/>
            <person name="Layman D."/>
            <person name="Du H."/>
            <person name="Ali J."/>
            <person name="Berghoff A."/>
            <person name="Jones K."/>
            <person name="Drone K."/>
            <person name="Cotton M."/>
            <person name="Joshu C."/>
            <person name="Antonoiu B."/>
            <person name="Zidanic M."/>
            <person name="Strong C."/>
            <person name="Sun H."/>
            <person name="Lamar B."/>
            <person name="Yordan C."/>
            <person name="Ma P."/>
            <person name="Zhong J."/>
            <person name="Preston R."/>
            <person name="Vil D."/>
            <person name="Shekher M."/>
            <person name="Matero A."/>
            <person name="Shah R."/>
            <person name="Swaby I.K."/>
            <person name="O'Shaughnessy A."/>
            <person name="Rodriguez M."/>
            <person name="Hoffman J."/>
            <person name="Till S."/>
            <person name="Granat S."/>
            <person name="Shohdy N."/>
            <person name="Hasegawa A."/>
            <person name="Hameed A."/>
            <person name="Lodhi M."/>
            <person name="Johnson A."/>
            <person name="Chen E."/>
            <person name="Marra M.A."/>
            <person name="Martienssen R."/>
            <person name="McCombie W.R."/>
        </authorList>
    </citation>
    <scope>NUCLEOTIDE SEQUENCE [LARGE SCALE GENOMIC DNA]</scope>
    <source>
        <strain>cv. Columbia</strain>
    </source>
</reference>
<reference key="4">
    <citation type="journal article" date="2017" name="Plant J.">
        <title>Araport11: a complete reannotation of the Arabidopsis thaliana reference genome.</title>
        <authorList>
            <person name="Cheng C.Y."/>
            <person name="Krishnakumar V."/>
            <person name="Chan A.P."/>
            <person name="Thibaud-Nissen F."/>
            <person name="Schobel S."/>
            <person name="Town C.D."/>
        </authorList>
    </citation>
    <scope>GENOME REANNOTATION</scope>
    <source>
        <strain>cv. Columbia</strain>
    </source>
</reference>
<reference key="5">
    <citation type="journal article" date="2000" name="Plant Physiol.">
        <title>Five geranylgeranyl diphosphate synthases expressed in different organs are localized into three subcellular compartments in Arabidopsis.</title>
        <authorList>
            <person name="Okada K."/>
            <person name="Saito T."/>
            <person name="Nakagawa T."/>
            <person name="Kawamukai M."/>
            <person name="Kamiya Y."/>
        </authorList>
    </citation>
    <scope>SUBCELLULAR LOCATION</scope>
    <scope>TISSUE SPECIFICITY</scope>
</reference>
<reference key="6">
    <citation type="journal article" date="2009" name="Proc. Natl. Acad. Sci. U.S.A.">
        <title>Heterodimeric geranyl(geranyl)diphosphate synthase from hop (Humulus lupulus) and the evolution of monoterpene biosynthesis.</title>
        <authorList>
            <person name="Wang G."/>
            <person name="Dixon R.A."/>
        </authorList>
    </citation>
    <scope>FUNCTION</scope>
    <scope>SUBUNIT</scope>
    <scope>INTERACTION WITH GGR</scope>
</reference>
<reference key="7">
    <citation type="journal article" date="2012" name="Mol. Cell. Proteomics">
        <title>Comparative large-scale characterisation of plant vs. mammal proteins reveals similar and idiosyncratic N-alpha acetylation features.</title>
        <authorList>
            <person name="Bienvenut W.V."/>
            <person name="Sumpton D."/>
            <person name="Martinez A."/>
            <person name="Lilla S."/>
            <person name="Espagne C."/>
            <person name="Meinnel T."/>
            <person name="Giglione C."/>
        </authorList>
    </citation>
    <scope>ACETYLATION [LARGE SCALE ANALYSIS] AT SER-52</scope>
    <scope>CLEAVAGE OF TRANSIT PEPTIDE [LARGE SCALE ANALYSIS] AFTER SER-51</scope>
    <scope>IDENTIFICATION BY MASS SPECTROMETRY [LARGE SCALE ANALYSIS]</scope>
</reference>
<reference key="8">
    <citation type="journal article" date="2016" name="Plant Physiol.">
        <title>A single Arabidopsis gene encodes two differentially targeted geranylgeranyl diphosphate synthase isoforms.</title>
        <authorList>
            <person name="Ruiz-Sola M.A."/>
            <person name="Barja M.V."/>
            <person name="Manzano D."/>
            <person name="Llorente B."/>
            <person name="Schipper B."/>
            <person name="Beekwilder J."/>
            <person name="Rodriguez-Concepcion M."/>
        </authorList>
    </citation>
    <scope>SUBCELLULAR LOCATION</scope>
    <scope>ALTERNATIVE INITIATION</scope>
</reference>
<reference key="9">
    <citation type="journal article" date="2016" name="Mol. Plant">
        <title>Structural analyses of short-chain prenyltransferases identify an evolutionarily conserved GFPPS clade in Brassicaceae plants.</title>
        <authorList>
            <person name="Wang C."/>
            <person name="Chen Q."/>
            <person name="Fan D."/>
            <person name="Li J."/>
            <person name="Wang G."/>
            <person name="Zhang P."/>
        </authorList>
    </citation>
    <scope>X-RAY CRYSTALLOGRAPHY (2.81 ANGSTROMS) OF 72-371</scope>
    <scope>SUBUNIT</scope>
</reference>
<sequence length="371" mass="40174">MASVTLGSWIVVHHHNHHHPSSILTKSRSRSCPITLTKPISFRSKRTVSSSSSIVSSSVVTKEDNLRQSEPSSFDFMSYIITKAELVNKALDSAVPLREPLKIHEAMRYSLLAGGKRVRPVLCIAACELVGGEESTAMPAACAVEMIHTMSLIHDDLPCMDNDDLRRGKPTNHKVFGEDVAVLAGDALLSFAFEHLASATSSDVVSPVRVVRAVGELAKAIGTEGLVAGQVVDISSEGLDLNDVGLEHLEFIHLHKTAALLEASAVLGAIVGGGSDDEIERLRKFARCIGLLFQVVDDILDVTKSSKELGKTAGKDLIADKLTYPKIMGLEKSREFAEKLNREARDQLLGFDSDKVAPLLALANYIAYRQN</sequence>
<feature type="transit peptide" description="Chloroplast" evidence="11">
    <location>
        <begin position="1"/>
        <end position="51"/>
    </location>
</feature>
<feature type="chain" id="PRO_0000016471" description="Heterodimeric geranylgeranyl pyrophosphate synthase large subunit 1, chloroplastic">
    <location>
        <begin position="52"/>
        <end position="371"/>
    </location>
</feature>
<feature type="binding site" evidence="2">
    <location>
        <position position="116"/>
    </location>
    <ligand>
        <name>isopentenyl diphosphate</name>
        <dbReference type="ChEBI" id="CHEBI:128769"/>
    </ligand>
</feature>
<feature type="binding site" evidence="2">
    <location>
        <position position="119"/>
    </location>
    <ligand>
        <name>isopentenyl diphosphate</name>
        <dbReference type="ChEBI" id="CHEBI:128769"/>
    </ligand>
</feature>
<feature type="binding site" evidence="3">
    <location>
        <position position="148"/>
    </location>
    <ligand>
        <name>isopentenyl diphosphate</name>
        <dbReference type="ChEBI" id="CHEBI:128769"/>
    </ligand>
</feature>
<feature type="binding site" evidence="2">
    <location>
        <position position="155"/>
    </location>
    <ligand>
        <name>Mg(2+)</name>
        <dbReference type="ChEBI" id="CHEBI:18420"/>
        <label>1</label>
    </ligand>
</feature>
<feature type="binding site" evidence="2">
    <location>
        <position position="155"/>
    </location>
    <ligand>
        <name>Mg(2+)</name>
        <dbReference type="ChEBI" id="CHEBI:18420"/>
        <label>2</label>
    </ligand>
</feature>
<feature type="binding site" evidence="2">
    <location>
        <position position="161"/>
    </location>
    <ligand>
        <name>Mg(2+)</name>
        <dbReference type="ChEBI" id="CHEBI:18420"/>
        <label>1</label>
    </ligand>
</feature>
<feature type="binding site" evidence="2">
    <location>
        <position position="161"/>
    </location>
    <ligand>
        <name>Mg(2+)</name>
        <dbReference type="ChEBI" id="CHEBI:18420"/>
        <label>2</label>
    </ligand>
</feature>
<feature type="binding site" evidence="1">
    <location>
        <position position="166"/>
    </location>
    <ligand>
        <name>dimethylallyl diphosphate</name>
        <dbReference type="ChEBI" id="CHEBI:57623"/>
    </ligand>
</feature>
<feature type="binding site" evidence="2">
    <location>
        <position position="167"/>
    </location>
    <ligand>
        <name>isopentenyl diphosphate</name>
        <dbReference type="ChEBI" id="CHEBI:128769"/>
    </ligand>
</feature>
<feature type="binding site" evidence="1">
    <location>
        <position position="256"/>
    </location>
    <ligand>
        <name>dimethylallyl diphosphate</name>
        <dbReference type="ChEBI" id="CHEBI:57623"/>
    </ligand>
</feature>
<feature type="binding site" evidence="1">
    <location>
        <position position="257"/>
    </location>
    <ligand>
        <name>dimethylallyl diphosphate</name>
        <dbReference type="ChEBI" id="CHEBI:57623"/>
    </ligand>
</feature>
<feature type="binding site" evidence="1">
    <location>
        <position position="294"/>
    </location>
    <ligand>
        <name>dimethylallyl diphosphate</name>
        <dbReference type="ChEBI" id="CHEBI:57623"/>
    </ligand>
</feature>
<feature type="binding site" evidence="1">
    <location>
        <position position="311"/>
    </location>
    <ligand>
        <name>dimethylallyl diphosphate</name>
        <dbReference type="ChEBI" id="CHEBI:57623"/>
    </ligand>
</feature>
<feature type="binding site" evidence="1">
    <location>
        <position position="321"/>
    </location>
    <ligand>
        <name>dimethylallyl diphosphate</name>
        <dbReference type="ChEBI" id="CHEBI:57623"/>
    </ligand>
</feature>
<feature type="modified residue" description="N-acetylserine" evidence="11">
    <location>
        <position position="52"/>
    </location>
</feature>
<feature type="splice variant" id="VSP_062244" description="In isoform 2." evidence="7">
    <location>
        <begin position="1"/>
        <end position="76"/>
    </location>
</feature>
<feature type="sequence conflict" description="In Ref. 1; AAA32797." evidence="9" ref="1">
    <original>R</original>
    <variation>S</variation>
    <location>
        <position position="108"/>
    </location>
</feature>
<feature type="sequence conflict" description="In Ref. 1; AAA32797." evidence="9" ref="1">
    <original>A</original>
    <variation>R</variation>
    <location>
        <position position="141"/>
    </location>
</feature>
<feature type="sequence conflict" description="In Ref. 1; AAA32797." evidence="9" ref="1">
    <original>A</original>
    <variation>S</variation>
    <location>
        <position position="192"/>
    </location>
</feature>
<feature type="helix" evidence="12">
    <location>
        <begin position="76"/>
        <end position="94"/>
    </location>
</feature>
<feature type="helix" evidence="12">
    <location>
        <begin position="101"/>
        <end position="111"/>
    </location>
</feature>
<feature type="helix" evidence="12">
    <location>
        <begin position="118"/>
        <end position="129"/>
    </location>
</feature>
<feature type="turn" evidence="12">
    <location>
        <begin position="134"/>
        <end position="137"/>
    </location>
</feature>
<feature type="helix" evidence="12">
    <location>
        <begin position="138"/>
        <end position="155"/>
    </location>
</feature>
<feature type="turn" evidence="12">
    <location>
        <begin position="158"/>
        <end position="161"/>
    </location>
</feature>
<feature type="strand" evidence="12">
    <location>
        <begin position="164"/>
        <end position="166"/>
    </location>
</feature>
<feature type="helix" evidence="12">
    <location>
        <begin position="172"/>
        <end position="176"/>
    </location>
</feature>
<feature type="helix" evidence="12">
    <location>
        <begin position="178"/>
        <end position="199"/>
    </location>
</feature>
<feature type="turn" evidence="12">
    <location>
        <begin position="202"/>
        <end position="204"/>
    </location>
</feature>
<feature type="helix" evidence="12">
    <location>
        <begin position="207"/>
        <end position="221"/>
    </location>
</feature>
<feature type="turn" evidence="12">
    <location>
        <begin position="222"/>
        <end position="224"/>
    </location>
</feature>
<feature type="helix" evidence="12">
    <location>
        <begin position="226"/>
        <end position="232"/>
    </location>
</feature>
<feature type="helix" evidence="12">
    <location>
        <begin position="246"/>
        <end position="256"/>
    </location>
</feature>
<feature type="helix" evidence="12">
    <location>
        <begin position="258"/>
        <end position="271"/>
    </location>
</feature>
<feature type="helix" evidence="12">
    <location>
        <begin position="276"/>
        <end position="301"/>
    </location>
</feature>
<feature type="turn" evidence="12">
    <location>
        <begin position="319"/>
        <end position="321"/>
    </location>
</feature>
<feature type="helix" evidence="12">
    <location>
        <begin position="324"/>
        <end position="328"/>
    </location>
</feature>
<feature type="helix" evidence="12">
    <location>
        <begin position="330"/>
        <end position="346"/>
    </location>
</feature>
<feature type="turn" evidence="12">
    <location>
        <begin position="347"/>
        <end position="350"/>
    </location>
</feature>
<feature type="turn" evidence="12">
    <location>
        <begin position="353"/>
        <end position="356"/>
    </location>
</feature>
<feature type="helix" evidence="12">
    <location>
        <begin position="357"/>
        <end position="368"/>
    </location>
</feature>
<name>GGPP1_ARATH</name>